<sequence length="196" mass="20644">MDAKQSVAAAKPSLAKKTASASFRLRNGSLNAVRLRRVFDLFDRNGDGEITVDELAQALDALGLVADRDGLAATVSAYVPEGAAGLRFEDFDALHRALGDALFGSLDGAAAAGEPGGGGGDEEEEMREAFKVFDVDGDGFISASELQEVLKKLGLPEAGSLATVREMICNVDRNSDGRVDFGEFKSMMQGITVWGP</sequence>
<reference key="1">
    <citation type="journal article" date="2005" name="Nature">
        <title>The map-based sequence of the rice genome.</title>
        <authorList>
            <consortium name="International rice genome sequencing project (IRGSP)"/>
        </authorList>
    </citation>
    <scope>NUCLEOTIDE SEQUENCE [LARGE SCALE GENOMIC DNA]</scope>
    <source>
        <strain>cv. Nipponbare</strain>
    </source>
</reference>
<reference key="2">
    <citation type="journal article" date="2008" name="Nucleic Acids Res.">
        <title>The rice annotation project database (RAP-DB): 2008 update.</title>
        <authorList>
            <consortium name="The rice annotation project (RAP)"/>
        </authorList>
    </citation>
    <scope>GENOME REANNOTATION</scope>
    <source>
        <strain>cv. Nipponbare</strain>
    </source>
</reference>
<reference key="3">
    <citation type="journal article" date="2013" name="Rice">
        <title>Improvement of the Oryza sativa Nipponbare reference genome using next generation sequence and optical map data.</title>
        <authorList>
            <person name="Kawahara Y."/>
            <person name="de la Bastide M."/>
            <person name="Hamilton J.P."/>
            <person name="Kanamori H."/>
            <person name="McCombie W.R."/>
            <person name="Ouyang S."/>
            <person name="Schwartz D.C."/>
            <person name="Tanaka T."/>
            <person name="Wu J."/>
            <person name="Zhou S."/>
            <person name="Childs K.L."/>
            <person name="Davidson R.M."/>
            <person name="Lin H."/>
            <person name="Quesada-Ocampo L."/>
            <person name="Vaillancourt B."/>
            <person name="Sakai H."/>
            <person name="Lee S.S."/>
            <person name="Kim J."/>
            <person name="Numa H."/>
            <person name="Itoh T."/>
            <person name="Buell C.R."/>
            <person name="Matsumoto T."/>
        </authorList>
    </citation>
    <scope>GENOME REANNOTATION</scope>
    <source>
        <strain>cv. Nipponbare</strain>
    </source>
</reference>
<reference key="4">
    <citation type="journal article" date="2003" name="Science">
        <title>Collection, mapping, and annotation of over 28,000 cDNA clones from japonica rice.</title>
        <authorList>
            <consortium name="The rice full-length cDNA consortium"/>
        </authorList>
    </citation>
    <scope>NUCLEOTIDE SEQUENCE [LARGE SCALE MRNA]</scope>
    <source>
        <strain>cv. Nipponbare</strain>
    </source>
</reference>
<reference key="5">
    <citation type="journal article" date="2007" name="BMC Plant Biol.">
        <title>Genome-wide identification and analyses of the rice calmodulin and related potential calcium sensor proteins.</title>
        <authorList>
            <person name="Boonburapong B."/>
            <person name="Buaboocha T."/>
        </authorList>
    </citation>
    <scope>GENE FAMILY</scope>
    <scope>NOMENCLATURE</scope>
</reference>
<accession>Q84UL5</accession>
<accession>B7EJF0</accession>
<comment type="function">
    <text evidence="1">Potential calcium sensor.</text>
</comment>
<comment type="caution">
    <text evidence="3">Although assigned as a calmodulin family member by PubMed:17263873, it only contains EF-hand domains.</text>
</comment>
<feature type="chain" id="PRO_0000338446" description="Probable calcium-binding protein CML32">
    <location>
        <begin position="1"/>
        <end position="196"/>
    </location>
</feature>
<feature type="domain" description="EF-hand 1" evidence="2">
    <location>
        <begin position="30"/>
        <end position="65"/>
    </location>
</feature>
<feature type="domain" description="EF-hand 2" evidence="2">
    <location>
        <begin position="121"/>
        <end position="156"/>
    </location>
</feature>
<feature type="domain" description="EF-hand 3" evidence="2">
    <location>
        <begin position="159"/>
        <end position="194"/>
    </location>
</feature>
<feature type="binding site" evidence="2">
    <location>
        <position position="43"/>
    </location>
    <ligand>
        <name>Ca(2+)</name>
        <dbReference type="ChEBI" id="CHEBI:29108"/>
        <label>1</label>
    </ligand>
</feature>
<feature type="binding site" evidence="2">
    <location>
        <position position="45"/>
    </location>
    <ligand>
        <name>Ca(2+)</name>
        <dbReference type="ChEBI" id="CHEBI:29108"/>
        <label>1</label>
    </ligand>
</feature>
<feature type="binding site" evidence="2">
    <location>
        <position position="47"/>
    </location>
    <ligand>
        <name>Ca(2+)</name>
        <dbReference type="ChEBI" id="CHEBI:29108"/>
        <label>1</label>
    </ligand>
</feature>
<feature type="binding site" evidence="2">
    <location>
        <position position="49"/>
    </location>
    <ligand>
        <name>Ca(2+)</name>
        <dbReference type="ChEBI" id="CHEBI:29108"/>
        <label>1</label>
    </ligand>
</feature>
<feature type="binding site" evidence="2">
    <location>
        <position position="54"/>
    </location>
    <ligand>
        <name>Ca(2+)</name>
        <dbReference type="ChEBI" id="CHEBI:29108"/>
        <label>1</label>
    </ligand>
</feature>
<feature type="binding site" evidence="2">
    <location>
        <position position="134"/>
    </location>
    <ligand>
        <name>Ca(2+)</name>
        <dbReference type="ChEBI" id="CHEBI:29108"/>
        <label>2</label>
    </ligand>
</feature>
<feature type="binding site" evidence="2">
    <location>
        <position position="136"/>
    </location>
    <ligand>
        <name>Ca(2+)</name>
        <dbReference type="ChEBI" id="CHEBI:29108"/>
        <label>2</label>
    </ligand>
</feature>
<feature type="binding site" evidence="2">
    <location>
        <position position="138"/>
    </location>
    <ligand>
        <name>Ca(2+)</name>
        <dbReference type="ChEBI" id="CHEBI:29108"/>
        <label>2</label>
    </ligand>
</feature>
<feature type="binding site" evidence="2">
    <location>
        <position position="145"/>
    </location>
    <ligand>
        <name>Ca(2+)</name>
        <dbReference type="ChEBI" id="CHEBI:29108"/>
        <label>2</label>
    </ligand>
</feature>
<feature type="binding site" evidence="2">
    <location>
        <position position="172"/>
    </location>
    <ligand>
        <name>Ca(2+)</name>
        <dbReference type="ChEBI" id="CHEBI:29108"/>
        <label>3</label>
    </ligand>
</feature>
<feature type="binding site" evidence="2">
    <location>
        <position position="174"/>
    </location>
    <ligand>
        <name>Ca(2+)</name>
        <dbReference type="ChEBI" id="CHEBI:29108"/>
        <label>3</label>
    </ligand>
</feature>
<feature type="binding site" evidence="2">
    <location>
        <position position="176"/>
    </location>
    <ligand>
        <name>Ca(2+)</name>
        <dbReference type="ChEBI" id="CHEBI:29108"/>
        <label>3</label>
    </ligand>
</feature>
<feature type="binding site" evidence="2">
    <location>
        <position position="178"/>
    </location>
    <ligand>
        <name>Ca(2+)</name>
        <dbReference type="ChEBI" id="CHEBI:29108"/>
        <label>3</label>
    </ligand>
</feature>
<feature type="binding site" evidence="2">
    <location>
        <position position="183"/>
    </location>
    <ligand>
        <name>Ca(2+)</name>
        <dbReference type="ChEBI" id="CHEBI:29108"/>
        <label>3</label>
    </ligand>
</feature>
<dbReference type="EMBL" id="AP005506">
    <property type="protein sequence ID" value="BAC66766.1"/>
    <property type="molecule type" value="Genomic_DNA"/>
</dbReference>
<dbReference type="EMBL" id="AP005526">
    <property type="protein sequence ID" value="BAD33524.1"/>
    <property type="molecule type" value="Genomic_DNA"/>
</dbReference>
<dbReference type="EMBL" id="AP008214">
    <property type="protein sequence ID" value="BAF22897.1"/>
    <property type="molecule type" value="Genomic_DNA"/>
</dbReference>
<dbReference type="EMBL" id="AP014964">
    <property type="protein sequence ID" value="BAT03809.1"/>
    <property type="molecule type" value="Genomic_DNA"/>
</dbReference>
<dbReference type="EMBL" id="AK071435">
    <property type="protein sequence ID" value="BAG92497.1"/>
    <property type="molecule type" value="mRNA"/>
</dbReference>
<dbReference type="RefSeq" id="XP_015649587.1">
    <property type="nucleotide sequence ID" value="XM_015794101.1"/>
</dbReference>
<dbReference type="SMR" id="Q84UL5"/>
<dbReference type="FunCoup" id="Q84UL5">
    <property type="interactions" value="179"/>
</dbReference>
<dbReference type="STRING" id="39947.Q84UL5"/>
<dbReference type="PaxDb" id="39947-Q84UL5"/>
<dbReference type="EnsemblPlants" id="Os08t0144100-01">
    <property type="protein sequence ID" value="Os08t0144100-01"/>
    <property type="gene ID" value="Os08g0144100"/>
</dbReference>
<dbReference type="Gramene" id="Os08t0144100-01">
    <property type="protein sequence ID" value="Os08t0144100-01"/>
    <property type="gene ID" value="Os08g0144100"/>
</dbReference>
<dbReference type="KEGG" id="dosa:Os08g0144100"/>
<dbReference type="eggNOG" id="KOG0027">
    <property type="taxonomic scope" value="Eukaryota"/>
</dbReference>
<dbReference type="HOGENOM" id="CLU_061288_20_3_1"/>
<dbReference type="InParanoid" id="Q84UL5"/>
<dbReference type="OMA" id="HIRCCED"/>
<dbReference type="OrthoDB" id="26525at2759"/>
<dbReference type="Proteomes" id="UP000000763">
    <property type="component" value="Chromosome 8"/>
</dbReference>
<dbReference type="Proteomes" id="UP000059680">
    <property type="component" value="Chromosome 8"/>
</dbReference>
<dbReference type="GO" id="GO:0005509">
    <property type="term" value="F:calcium ion binding"/>
    <property type="evidence" value="ECO:0000318"/>
    <property type="project" value="GO_Central"/>
</dbReference>
<dbReference type="CDD" id="cd00051">
    <property type="entry name" value="EFh"/>
    <property type="match status" value="1"/>
</dbReference>
<dbReference type="FunFam" id="1.10.238.10:FF:000293">
    <property type="entry name" value="Calcium-binding protein CML42"/>
    <property type="match status" value="1"/>
</dbReference>
<dbReference type="Gene3D" id="1.10.238.10">
    <property type="entry name" value="EF-hand"/>
    <property type="match status" value="2"/>
</dbReference>
<dbReference type="InterPro" id="IPR011992">
    <property type="entry name" value="EF-hand-dom_pair"/>
</dbReference>
<dbReference type="InterPro" id="IPR018247">
    <property type="entry name" value="EF_Hand_1_Ca_BS"/>
</dbReference>
<dbReference type="InterPro" id="IPR002048">
    <property type="entry name" value="EF_hand_dom"/>
</dbReference>
<dbReference type="InterPro" id="IPR039647">
    <property type="entry name" value="EF_hand_pair_protein_CML-like"/>
</dbReference>
<dbReference type="PANTHER" id="PTHR10891">
    <property type="entry name" value="EF-HAND CALCIUM-BINDING DOMAIN CONTAINING PROTEIN"/>
    <property type="match status" value="1"/>
</dbReference>
<dbReference type="Pfam" id="PF13405">
    <property type="entry name" value="EF-hand_6"/>
    <property type="match status" value="1"/>
</dbReference>
<dbReference type="Pfam" id="PF13499">
    <property type="entry name" value="EF-hand_7"/>
    <property type="match status" value="1"/>
</dbReference>
<dbReference type="SMART" id="SM00054">
    <property type="entry name" value="EFh"/>
    <property type="match status" value="3"/>
</dbReference>
<dbReference type="SUPFAM" id="SSF47473">
    <property type="entry name" value="EF-hand"/>
    <property type="match status" value="1"/>
</dbReference>
<dbReference type="PROSITE" id="PS00018">
    <property type="entry name" value="EF_HAND_1"/>
    <property type="match status" value="3"/>
</dbReference>
<dbReference type="PROSITE" id="PS50222">
    <property type="entry name" value="EF_HAND_2"/>
    <property type="match status" value="3"/>
</dbReference>
<evidence type="ECO:0000250" key="1"/>
<evidence type="ECO:0000255" key="2">
    <source>
        <dbReference type="PROSITE-ProRule" id="PRU00448"/>
    </source>
</evidence>
<evidence type="ECO:0000305" key="3"/>
<name>CML32_ORYSJ</name>
<protein>
    <recommendedName>
        <fullName>Probable calcium-binding protein CML32</fullName>
    </recommendedName>
    <alternativeName>
        <fullName>Calmodulin-like protein 32</fullName>
    </alternativeName>
</protein>
<gene>
    <name type="primary">CML32</name>
    <name type="ordered locus">Os08g0144100</name>
    <name type="ordered locus">LOC_Os08g04890</name>
    <name type="ORF">P0571B09.102</name>
    <name type="ORF">P0665F09.116</name>
</gene>
<organism>
    <name type="scientific">Oryza sativa subsp. japonica</name>
    <name type="common">Rice</name>
    <dbReference type="NCBI Taxonomy" id="39947"/>
    <lineage>
        <taxon>Eukaryota</taxon>
        <taxon>Viridiplantae</taxon>
        <taxon>Streptophyta</taxon>
        <taxon>Embryophyta</taxon>
        <taxon>Tracheophyta</taxon>
        <taxon>Spermatophyta</taxon>
        <taxon>Magnoliopsida</taxon>
        <taxon>Liliopsida</taxon>
        <taxon>Poales</taxon>
        <taxon>Poaceae</taxon>
        <taxon>BOP clade</taxon>
        <taxon>Oryzoideae</taxon>
        <taxon>Oryzeae</taxon>
        <taxon>Oryzinae</taxon>
        <taxon>Oryza</taxon>
        <taxon>Oryza sativa</taxon>
    </lineage>
</organism>
<keyword id="KW-0106">Calcium</keyword>
<keyword id="KW-0479">Metal-binding</keyword>
<keyword id="KW-1185">Reference proteome</keyword>
<keyword id="KW-0677">Repeat</keyword>
<proteinExistence type="evidence at transcript level"/>